<organism>
    <name type="scientific">Legionella pneumophila subsp. pneumophila (strain Philadelphia 1 / ATCC 33152 / DSM 7513)</name>
    <dbReference type="NCBI Taxonomy" id="272624"/>
    <lineage>
        <taxon>Bacteria</taxon>
        <taxon>Pseudomonadati</taxon>
        <taxon>Pseudomonadota</taxon>
        <taxon>Gammaproteobacteria</taxon>
        <taxon>Legionellales</taxon>
        <taxon>Legionellaceae</taxon>
        <taxon>Legionella</taxon>
    </lineage>
</organism>
<reference key="1">
    <citation type="journal article" date="2004" name="Science">
        <title>The genomic sequence of the accidental pathogen Legionella pneumophila.</title>
        <authorList>
            <person name="Chien M."/>
            <person name="Morozova I."/>
            <person name="Shi S."/>
            <person name="Sheng H."/>
            <person name="Chen J."/>
            <person name="Gomez S.M."/>
            <person name="Asamani G."/>
            <person name="Hill K."/>
            <person name="Nuara J."/>
            <person name="Feder M."/>
            <person name="Rineer J."/>
            <person name="Greenberg J.J."/>
            <person name="Steshenko V."/>
            <person name="Park S.H."/>
            <person name="Zhao B."/>
            <person name="Teplitskaya E."/>
            <person name="Edwards J.R."/>
            <person name="Pampou S."/>
            <person name="Georghiou A."/>
            <person name="Chou I.-C."/>
            <person name="Iannuccilli W."/>
            <person name="Ulz M.E."/>
            <person name="Kim D.H."/>
            <person name="Geringer-Sameth A."/>
            <person name="Goldsberry C."/>
            <person name="Morozov P."/>
            <person name="Fischer S.G."/>
            <person name="Segal G."/>
            <person name="Qu X."/>
            <person name="Rzhetsky A."/>
            <person name="Zhang P."/>
            <person name="Cayanis E."/>
            <person name="De Jong P.J."/>
            <person name="Ju J."/>
            <person name="Kalachikov S."/>
            <person name="Shuman H.A."/>
            <person name="Russo J.J."/>
        </authorList>
    </citation>
    <scope>NUCLEOTIDE SEQUENCE [LARGE SCALE GENOMIC DNA]</scope>
    <source>
        <strain>Philadelphia 1 / ATCC 33152 / DSM 7513</strain>
    </source>
</reference>
<dbReference type="EC" id="3.6.1.9" evidence="1"/>
<dbReference type="EMBL" id="AE017354">
    <property type="protein sequence ID" value="AAU28105.1"/>
    <property type="molecule type" value="Genomic_DNA"/>
</dbReference>
<dbReference type="RefSeq" id="WP_010947752.1">
    <property type="nucleotide sequence ID" value="NC_002942.5"/>
</dbReference>
<dbReference type="RefSeq" id="YP_096052.1">
    <property type="nucleotide sequence ID" value="NC_002942.5"/>
</dbReference>
<dbReference type="SMR" id="Q5ZTX2"/>
<dbReference type="STRING" id="272624.lpg2036"/>
<dbReference type="PaxDb" id="272624-lpg2036"/>
<dbReference type="KEGG" id="lpn:lpg2036"/>
<dbReference type="PATRIC" id="fig|272624.6.peg.2133"/>
<dbReference type="eggNOG" id="COG0424">
    <property type="taxonomic scope" value="Bacteria"/>
</dbReference>
<dbReference type="HOGENOM" id="CLU_040416_1_1_6"/>
<dbReference type="OrthoDB" id="9813694at2"/>
<dbReference type="Proteomes" id="UP000000609">
    <property type="component" value="Chromosome"/>
</dbReference>
<dbReference type="GO" id="GO:0005737">
    <property type="term" value="C:cytoplasm"/>
    <property type="evidence" value="ECO:0007669"/>
    <property type="project" value="UniProtKB-SubCell"/>
</dbReference>
<dbReference type="GO" id="GO:0047429">
    <property type="term" value="F:nucleoside triphosphate diphosphatase activity"/>
    <property type="evidence" value="ECO:0007669"/>
    <property type="project" value="UniProtKB-EC"/>
</dbReference>
<dbReference type="GO" id="GO:0009117">
    <property type="term" value="P:nucleotide metabolic process"/>
    <property type="evidence" value="ECO:0007669"/>
    <property type="project" value="UniProtKB-KW"/>
</dbReference>
<dbReference type="CDD" id="cd00555">
    <property type="entry name" value="Maf"/>
    <property type="match status" value="1"/>
</dbReference>
<dbReference type="Gene3D" id="3.90.950.10">
    <property type="match status" value="1"/>
</dbReference>
<dbReference type="HAMAP" id="MF_00528">
    <property type="entry name" value="Maf"/>
    <property type="match status" value="1"/>
</dbReference>
<dbReference type="InterPro" id="IPR029001">
    <property type="entry name" value="ITPase-like_fam"/>
</dbReference>
<dbReference type="InterPro" id="IPR003697">
    <property type="entry name" value="Maf-like"/>
</dbReference>
<dbReference type="NCBIfam" id="TIGR00172">
    <property type="entry name" value="maf"/>
    <property type="match status" value="1"/>
</dbReference>
<dbReference type="PANTHER" id="PTHR43213">
    <property type="entry name" value="BIFUNCTIONAL DTTP/UTP PYROPHOSPHATASE/METHYLTRANSFERASE PROTEIN-RELATED"/>
    <property type="match status" value="1"/>
</dbReference>
<dbReference type="PANTHER" id="PTHR43213:SF5">
    <property type="entry name" value="BIFUNCTIONAL DTTP_UTP PYROPHOSPHATASE_METHYLTRANSFERASE PROTEIN-RELATED"/>
    <property type="match status" value="1"/>
</dbReference>
<dbReference type="Pfam" id="PF02545">
    <property type="entry name" value="Maf"/>
    <property type="match status" value="1"/>
</dbReference>
<dbReference type="PIRSF" id="PIRSF006305">
    <property type="entry name" value="Maf"/>
    <property type="match status" value="1"/>
</dbReference>
<dbReference type="SUPFAM" id="SSF52972">
    <property type="entry name" value="ITPase-like"/>
    <property type="match status" value="1"/>
</dbReference>
<comment type="function">
    <text evidence="1">Nucleoside triphosphate pyrophosphatase. May have a dual role in cell division arrest and in preventing the incorporation of modified nucleotides into cellular nucleic acids.</text>
</comment>
<comment type="catalytic activity">
    <reaction evidence="1">
        <text>a ribonucleoside 5'-triphosphate + H2O = a ribonucleoside 5'-phosphate + diphosphate + H(+)</text>
        <dbReference type="Rhea" id="RHEA:23996"/>
        <dbReference type="ChEBI" id="CHEBI:15377"/>
        <dbReference type="ChEBI" id="CHEBI:15378"/>
        <dbReference type="ChEBI" id="CHEBI:33019"/>
        <dbReference type="ChEBI" id="CHEBI:58043"/>
        <dbReference type="ChEBI" id="CHEBI:61557"/>
        <dbReference type="EC" id="3.6.1.9"/>
    </reaction>
</comment>
<comment type="catalytic activity">
    <reaction evidence="1">
        <text>a 2'-deoxyribonucleoside 5'-triphosphate + H2O = a 2'-deoxyribonucleoside 5'-phosphate + diphosphate + H(+)</text>
        <dbReference type="Rhea" id="RHEA:44644"/>
        <dbReference type="ChEBI" id="CHEBI:15377"/>
        <dbReference type="ChEBI" id="CHEBI:15378"/>
        <dbReference type="ChEBI" id="CHEBI:33019"/>
        <dbReference type="ChEBI" id="CHEBI:61560"/>
        <dbReference type="ChEBI" id="CHEBI:65317"/>
        <dbReference type="EC" id="3.6.1.9"/>
    </reaction>
</comment>
<comment type="cofactor">
    <cofactor evidence="1">
        <name>a divalent metal cation</name>
        <dbReference type="ChEBI" id="CHEBI:60240"/>
    </cofactor>
</comment>
<comment type="subcellular location">
    <subcellularLocation>
        <location evidence="1">Cytoplasm</location>
    </subcellularLocation>
</comment>
<comment type="similarity">
    <text evidence="1">Belongs to the Maf family.</text>
</comment>
<feature type="chain" id="PRO_0000267331" description="Nucleoside triphosphate pyrophosphatase">
    <location>
        <begin position="1"/>
        <end position="200"/>
    </location>
</feature>
<feature type="active site" description="Proton acceptor" evidence="1">
    <location>
        <position position="79"/>
    </location>
</feature>
<keyword id="KW-0963">Cytoplasm</keyword>
<keyword id="KW-0378">Hydrolase</keyword>
<keyword id="KW-0546">Nucleotide metabolism</keyword>
<keyword id="KW-1185">Reference proteome</keyword>
<name>NTPP_LEGPH</name>
<evidence type="ECO:0000255" key="1">
    <source>
        <dbReference type="HAMAP-Rule" id="MF_00528"/>
    </source>
</evidence>
<proteinExistence type="inferred from homology"/>
<accession>Q5ZTX2</accession>
<sequence length="200" mass="22569">MSKFLQQKPIILASSSTIRHKLMKSLGLDFLVVPSNCNEEEIKTRHNSVELVELGITLAKIKALDVSQHYPEHYIIAADQLCVADKRVFNKPLNHQTAVSHLRELSGKQHQQIACLCIVKESKILWQYHETATLTLHHLSEKTIEAYLQAEKPYQSCGAYQYEGLGKWLFKEVQGSEDTILGLPLMPLVNALVNLKVVGI</sequence>
<gene>
    <name type="ordered locus">lpg2036</name>
</gene>
<protein>
    <recommendedName>
        <fullName evidence="1">Nucleoside triphosphate pyrophosphatase</fullName>
        <ecNumber evidence="1">3.6.1.9</ecNumber>
    </recommendedName>
    <alternativeName>
        <fullName evidence="1">Nucleotide pyrophosphatase</fullName>
        <shortName evidence="1">Nucleotide PPase</shortName>
    </alternativeName>
</protein>